<sequence length="256" mass="28433">MTKITRIVREARDQTRLTALDFAKAIFDDFIQLHGDRSFRDDGAVIGGIGSLDGRPVTVIGIQKGKNLQDNLKRNFGQPHPEGYRKALRLMKQAEKFGRPIVTFINTAGAYPGVGAEERGQGEAIARNLMEMSDLKVPIIAIIIGEGGSGGALALGVANRVWMLENSIYAVLSPEGFASILWKDGSRAMEAAELMKITSHELLQMEIVDKVIEETGLSNQDLITSIKQELLVELEQLSSWSVEELVDQRYQRFRKY</sequence>
<evidence type="ECO:0000255" key="1">
    <source>
        <dbReference type="HAMAP-Rule" id="MF_00823"/>
    </source>
</evidence>
<evidence type="ECO:0000255" key="2">
    <source>
        <dbReference type="PROSITE-ProRule" id="PRU01137"/>
    </source>
</evidence>
<reference key="1">
    <citation type="journal article" date="2007" name="J. Bacteriol.">
        <title>Genome-wide transcriptional changes in Streptococcus gordonii in response to competence signaling peptide.</title>
        <authorList>
            <person name="Vickerman M.M."/>
            <person name="Iobst S."/>
            <person name="Jesionowski A.M."/>
            <person name="Gill S.R."/>
        </authorList>
    </citation>
    <scope>NUCLEOTIDE SEQUENCE [LARGE SCALE GENOMIC DNA]</scope>
    <source>
        <strain>Challis / ATCC 35105 / BCRC 15272 / CH1 / DL1 / V288</strain>
    </source>
</reference>
<gene>
    <name evidence="1" type="primary">accA</name>
    <name type="ordered locus">SGO_1687</name>
</gene>
<feature type="chain" id="PRO_1000083939" description="Acetyl-coenzyme A carboxylase carboxyl transferase subunit alpha">
    <location>
        <begin position="1"/>
        <end position="256"/>
    </location>
</feature>
<feature type="domain" description="CoA carboxyltransferase C-terminal" evidence="2">
    <location>
        <begin position="1"/>
        <end position="236"/>
    </location>
</feature>
<name>ACCA_STRGC</name>
<proteinExistence type="inferred from homology"/>
<comment type="function">
    <text evidence="1">Component of the acetyl coenzyme A carboxylase (ACC) complex. First, biotin carboxylase catalyzes the carboxylation of biotin on its carrier protein (BCCP) and then the CO(2) group is transferred by the carboxyltransferase to acetyl-CoA to form malonyl-CoA.</text>
</comment>
<comment type="catalytic activity">
    <reaction evidence="1">
        <text>N(6)-carboxybiotinyl-L-lysyl-[protein] + acetyl-CoA = N(6)-biotinyl-L-lysyl-[protein] + malonyl-CoA</text>
        <dbReference type="Rhea" id="RHEA:54728"/>
        <dbReference type="Rhea" id="RHEA-COMP:10505"/>
        <dbReference type="Rhea" id="RHEA-COMP:10506"/>
        <dbReference type="ChEBI" id="CHEBI:57288"/>
        <dbReference type="ChEBI" id="CHEBI:57384"/>
        <dbReference type="ChEBI" id="CHEBI:83144"/>
        <dbReference type="ChEBI" id="CHEBI:83145"/>
        <dbReference type="EC" id="2.1.3.15"/>
    </reaction>
</comment>
<comment type="pathway">
    <text evidence="1">Lipid metabolism; malonyl-CoA biosynthesis; malonyl-CoA from acetyl-CoA: step 1/1.</text>
</comment>
<comment type="subunit">
    <text evidence="1">Acetyl-CoA carboxylase is a heterohexamer composed of biotin carboxyl carrier protein (AccB), biotin carboxylase (AccC) and two subunits each of ACCase subunit alpha (AccA) and ACCase subunit beta (AccD).</text>
</comment>
<comment type="subcellular location">
    <subcellularLocation>
        <location evidence="1">Cytoplasm</location>
    </subcellularLocation>
</comment>
<comment type="similarity">
    <text evidence="1">Belongs to the AccA family.</text>
</comment>
<dbReference type="EC" id="2.1.3.15" evidence="1"/>
<dbReference type="EMBL" id="CP000725">
    <property type="protein sequence ID" value="ABV10921.1"/>
    <property type="molecule type" value="Genomic_DNA"/>
</dbReference>
<dbReference type="RefSeq" id="WP_012130742.1">
    <property type="nucleotide sequence ID" value="NC_009785.1"/>
</dbReference>
<dbReference type="SMR" id="A8AYV4"/>
<dbReference type="STRING" id="467705.SGO_1687"/>
<dbReference type="KEGG" id="sgo:SGO_1687"/>
<dbReference type="eggNOG" id="COG0825">
    <property type="taxonomic scope" value="Bacteria"/>
</dbReference>
<dbReference type="HOGENOM" id="CLU_015486_0_2_9"/>
<dbReference type="UniPathway" id="UPA00655">
    <property type="reaction ID" value="UER00711"/>
</dbReference>
<dbReference type="Proteomes" id="UP000001131">
    <property type="component" value="Chromosome"/>
</dbReference>
<dbReference type="GO" id="GO:0009317">
    <property type="term" value="C:acetyl-CoA carboxylase complex"/>
    <property type="evidence" value="ECO:0007669"/>
    <property type="project" value="InterPro"/>
</dbReference>
<dbReference type="GO" id="GO:0003989">
    <property type="term" value="F:acetyl-CoA carboxylase activity"/>
    <property type="evidence" value="ECO:0007669"/>
    <property type="project" value="InterPro"/>
</dbReference>
<dbReference type="GO" id="GO:0005524">
    <property type="term" value="F:ATP binding"/>
    <property type="evidence" value="ECO:0007669"/>
    <property type="project" value="UniProtKB-KW"/>
</dbReference>
<dbReference type="GO" id="GO:0016743">
    <property type="term" value="F:carboxyl- or carbamoyltransferase activity"/>
    <property type="evidence" value="ECO:0007669"/>
    <property type="project" value="UniProtKB-UniRule"/>
</dbReference>
<dbReference type="GO" id="GO:0006633">
    <property type="term" value="P:fatty acid biosynthetic process"/>
    <property type="evidence" value="ECO:0007669"/>
    <property type="project" value="UniProtKB-KW"/>
</dbReference>
<dbReference type="GO" id="GO:2001295">
    <property type="term" value="P:malonyl-CoA biosynthetic process"/>
    <property type="evidence" value="ECO:0007669"/>
    <property type="project" value="UniProtKB-UniRule"/>
</dbReference>
<dbReference type="Gene3D" id="3.90.226.10">
    <property type="entry name" value="2-enoyl-CoA Hydratase, Chain A, domain 1"/>
    <property type="match status" value="1"/>
</dbReference>
<dbReference type="HAMAP" id="MF_00823">
    <property type="entry name" value="AcetylCoA_CT_alpha"/>
    <property type="match status" value="1"/>
</dbReference>
<dbReference type="InterPro" id="IPR001095">
    <property type="entry name" value="Acetyl_CoA_COase_a_su"/>
</dbReference>
<dbReference type="InterPro" id="IPR029045">
    <property type="entry name" value="ClpP/crotonase-like_dom_sf"/>
</dbReference>
<dbReference type="InterPro" id="IPR011763">
    <property type="entry name" value="COA_CT_C"/>
</dbReference>
<dbReference type="NCBIfam" id="TIGR00513">
    <property type="entry name" value="accA"/>
    <property type="match status" value="1"/>
</dbReference>
<dbReference type="NCBIfam" id="NF041504">
    <property type="entry name" value="AccA_sub"/>
    <property type="match status" value="1"/>
</dbReference>
<dbReference type="NCBIfam" id="NF004344">
    <property type="entry name" value="PRK05724.1"/>
    <property type="match status" value="1"/>
</dbReference>
<dbReference type="NCBIfam" id="NF008971">
    <property type="entry name" value="PRK12319.1"/>
    <property type="match status" value="1"/>
</dbReference>
<dbReference type="PANTHER" id="PTHR42853">
    <property type="entry name" value="ACETYL-COENZYME A CARBOXYLASE CARBOXYL TRANSFERASE SUBUNIT ALPHA"/>
    <property type="match status" value="1"/>
</dbReference>
<dbReference type="PANTHER" id="PTHR42853:SF3">
    <property type="entry name" value="ACETYL-COENZYME A CARBOXYLASE CARBOXYL TRANSFERASE SUBUNIT ALPHA, CHLOROPLASTIC"/>
    <property type="match status" value="1"/>
</dbReference>
<dbReference type="Pfam" id="PF03255">
    <property type="entry name" value="ACCA"/>
    <property type="match status" value="1"/>
</dbReference>
<dbReference type="PRINTS" id="PR01069">
    <property type="entry name" value="ACCCTRFRASEA"/>
</dbReference>
<dbReference type="SUPFAM" id="SSF52096">
    <property type="entry name" value="ClpP/crotonase"/>
    <property type="match status" value="1"/>
</dbReference>
<dbReference type="PROSITE" id="PS50989">
    <property type="entry name" value="COA_CT_CTER"/>
    <property type="match status" value="1"/>
</dbReference>
<accession>A8AYV4</accession>
<keyword id="KW-0067">ATP-binding</keyword>
<keyword id="KW-0963">Cytoplasm</keyword>
<keyword id="KW-0275">Fatty acid biosynthesis</keyword>
<keyword id="KW-0276">Fatty acid metabolism</keyword>
<keyword id="KW-0444">Lipid biosynthesis</keyword>
<keyword id="KW-0443">Lipid metabolism</keyword>
<keyword id="KW-0547">Nucleotide-binding</keyword>
<keyword id="KW-1185">Reference proteome</keyword>
<keyword id="KW-0808">Transferase</keyword>
<organism>
    <name type="scientific">Streptococcus gordonii (strain Challis / ATCC 35105 / BCRC 15272 / CH1 / DL1 / V288)</name>
    <dbReference type="NCBI Taxonomy" id="467705"/>
    <lineage>
        <taxon>Bacteria</taxon>
        <taxon>Bacillati</taxon>
        <taxon>Bacillota</taxon>
        <taxon>Bacilli</taxon>
        <taxon>Lactobacillales</taxon>
        <taxon>Streptococcaceae</taxon>
        <taxon>Streptococcus</taxon>
    </lineage>
</organism>
<protein>
    <recommendedName>
        <fullName evidence="1">Acetyl-coenzyme A carboxylase carboxyl transferase subunit alpha</fullName>
        <shortName evidence="1">ACCase subunit alpha</shortName>
        <shortName evidence="1">Acetyl-CoA carboxylase carboxyltransferase subunit alpha</shortName>
        <ecNumber evidence="1">2.1.3.15</ecNumber>
    </recommendedName>
</protein>